<gene>
    <name evidence="1" type="primary">rpmB</name>
    <name type="ordered locus">CD630_25621</name>
    <name type="ORF">CD2562A</name>
</gene>
<dbReference type="EMBL" id="AM180355">
    <property type="protein sequence ID" value="CAJ69451.1"/>
    <property type="molecule type" value="Genomic_DNA"/>
</dbReference>
<dbReference type="RefSeq" id="WP_003416297.1">
    <property type="nucleotide sequence ID" value="NZ_JAUPES010000012.1"/>
</dbReference>
<dbReference type="RefSeq" id="YP_001089078.1">
    <property type="nucleotide sequence ID" value="NC_009089.1"/>
</dbReference>
<dbReference type="SMR" id="Q182Q0"/>
<dbReference type="STRING" id="272563.CD630_25621"/>
<dbReference type="EnsemblBacteria" id="CAJ69451">
    <property type="protein sequence ID" value="CAJ69451"/>
    <property type="gene ID" value="CD630_25621"/>
</dbReference>
<dbReference type="GeneID" id="66354961"/>
<dbReference type="KEGG" id="cdf:CD630_25621"/>
<dbReference type="KEGG" id="pdc:CDIF630_02814"/>
<dbReference type="PATRIC" id="fig|272563.120.peg.2702"/>
<dbReference type="eggNOG" id="COG0227">
    <property type="taxonomic scope" value="Bacteria"/>
</dbReference>
<dbReference type="OrthoDB" id="9805609at2"/>
<dbReference type="PhylomeDB" id="Q182Q0"/>
<dbReference type="BioCyc" id="PDIF272563:G12WB-2718-MONOMER"/>
<dbReference type="Proteomes" id="UP000001978">
    <property type="component" value="Chromosome"/>
</dbReference>
<dbReference type="GO" id="GO:1990904">
    <property type="term" value="C:ribonucleoprotein complex"/>
    <property type="evidence" value="ECO:0007669"/>
    <property type="project" value="UniProtKB-KW"/>
</dbReference>
<dbReference type="GO" id="GO:0005840">
    <property type="term" value="C:ribosome"/>
    <property type="evidence" value="ECO:0007669"/>
    <property type="project" value="UniProtKB-KW"/>
</dbReference>
<dbReference type="GO" id="GO:0003735">
    <property type="term" value="F:structural constituent of ribosome"/>
    <property type="evidence" value="ECO:0007669"/>
    <property type="project" value="InterPro"/>
</dbReference>
<dbReference type="GO" id="GO:0006412">
    <property type="term" value="P:translation"/>
    <property type="evidence" value="ECO:0007669"/>
    <property type="project" value="UniProtKB-UniRule"/>
</dbReference>
<dbReference type="Gene3D" id="2.30.170.40">
    <property type="entry name" value="Ribosomal protein L28/L24"/>
    <property type="match status" value="1"/>
</dbReference>
<dbReference type="HAMAP" id="MF_00373">
    <property type="entry name" value="Ribosomal_bL28"/>
    <property type="match status" value="1"/>
</dbReference>
<dbReference type="InterPro" id="IPR050096">
    <property type="entry name" value="Bacterial_rp_bL28"/>
</dbReference>
<dbReference type="InterPro" id="IPR026569">
    <property type="entry name" value="Ribosomal_bL28"/>
</dbReference>
<dbReference type="InterPro" id="IPR034704">
    <property type="entry name" value="Ribosomal_bL28/bL31-like_sf"/>
</dbReference>
<dbReference type="InterPro" id="IPR001383">
    <property type="entry name" value="Ribosomal_bL28_bact-type"/>
</dbReference>
<dbReference type="InterPro" id="IPR037147">
    <property type="entry name" value="Ribosomal_bL28_sf"/>
</dbReference>
<dbReference type="NCBIfam" id="TIGR00009">
    <property type="entry name" value="L28"/>
    <property type="match status" value="1"/>
</dbReference>
<dbReference type="PANTHER" id="PTHR39080">
    <property type="entry name" value="50S RIBOSOMAL PROTEIN L28"/>
    <property type="match status" value="1"/>
</dbReference>
<dbReference type="PANTHER" id="PTHR39080:SF1">
    <property type="entry name" value="LARGE RIBOSOMAL SUBUNIT PROTEIN BL28A"/>
    <property type="match status" value="1"/>
</dbReference>
<dbReference type="Pfam" id="PF00830">
    <property type="entry name" value="Ribosomal_L28"/>
    <property type="match status" value="1"/>
</dbReference>
<dbReference type="SUPFAM" id="SSF143800">
    <property type="entry name" value="L28p-like"/>
    <property type="match status" value="1"/>
</dbReference>
<protein>
    <recommendedName>
        <fullName evidence="1">Large ribosomal subunit protein bL28</fullName>
    </recommendedName>
    <alternativeName>
        <fullName evidence="2">50S ribosomal protein L28</fullName>
    </alternativeName>
</protein>
<sequence>MAKVCSVCGKGKVSGNQVSHSNKHNKRTWSANLRSVRAIIDGAPKRVKVCTRCLRSGKIERA</sequence>
<reference key="1">
    <citation type="journal article" date="2006" name="Nat. Genet.">
        <title>The multidrug-resistant human pathogen Clostridium difficile has a highly mobile, mosaic genome.</title>
        <authorList>
            <person name="Sebaihia M."/>
            <person name="Wren B.W."/>
            <person name="Mullany P."/>
            <person name="Fairweather N.F."/>
            <person name="Minton N."/>
            <person name="Stabler R."/>
            <person name="Thomson N.R."/>
            <person name="Roberts A.P."/>
            <person name="Cerdeno-Tarraga A.M."/>
            <person name="Wang H."/>
            <person name="Holden M.T.G."/>
            <person name="Wright A."/>
            <person name="Churcher C."/>
            <person name="Quail M.A."/>
            <person name="Baker S."/>
            <person name="Bason N."/>
            <person name="Brooks K."/>
            <person name="Chillingworth T."/>
            <person name="Cronin A."/>
            <person name="Davis P."/>
            <person name="Dowd L."/>
            <person name="Fraser A."/>
            <person name="Feltwell T."/>
            <person name="Hance Z."/>
            <person name="Holroyd S."/>
            <person name="Jagels K."/>
            <person name="Moule S."/>
            <person name="Mungall K."/>
            <person name="Price C."/>
            <person name="Rabbinowitsch E."/>
            <person name="Sharp S."/>
            <person name="Simmonds M."/>
            <person name="Stevens K."/>
            <person name="Unwin L."/>
            <person name="Whithead S."/>
            <person name="Dupuy B."/>
            <person name="Dougan G."/>
            <person name="Barrell B."/>
            <person name="Parkhill J."/>
        </authorList>
    </citation>
    <scope>NUCLEOTIDE SEQUENCE [LARGE SCALE GENOMIC DNA]</scope>
    <source>
        <strain>630</strain>
    </source>
</reference>
<evidence type="ECO:0000255" key="1">
    <source>
        <dbReference type="HAMAP-Rule" id="MF_00373"/>
    </source>
</evidence>
<evidence type="ECO:0000305" key="2"/>
<name>RL28_CLOD6</name>
<keyword id="KW-1185">Reference proteome</keyword>
<keyword id="KW-0687">Ribonucleoprotein</keyword>
<keyword id="KW-0689">Ribosomal protein</keyword>
<organism>
    <name type="scientific">Clostridioides difficile (strain 630)</name>
    <name type="common">Peptoclostridium difficile</name>
    <dbReference type="NCBI Taxonomy" id="272563"/>
    <lineage>
        <taxon>Bacteria</taxon>
        <taxon>Bacillati</taxon>
        <taxon>Bacillota</taxon>
        <taxon>Clostridia</taxon>
        <taxon>Peptostreptococcales</taxon>
        <taxon>Peptostreptococcaceae</taxon>
        <taxon>Clostridioides</taxon>
    </lineage>
</organism>
<accession>Q182Q0</accession>
<comment type="similarity">
    <text evidence="1">Belongs to the bacterial ribosomal protein bL28 family.</text>
</comment>
<feature type="chain" id="PRO_1000007214" description="Large ribosomal subunit protein bL28">
    <location>
        <begin position="1"/>
        <end position="62"/>
    </location>
</feature>
<proteinExistence type="inferred from homology"/>